<gene>
    <name evidence="1" type="primary">ccmE</name>
    <name evidence="1" type="synonym">cycJ</name>
    <name type="ordered locus">EcHS_A2335</name>
</gene>
<feature type="chain" id="PRO_1000070810" description="Cytochrome c-type biogenesis protein CcmE">
    <location>
        <begin position="1"/>
        <end position="159"/>
    </location>
</feature>
<feature type="topological domain" description="Cytoplasmic" evidence="1">
    <location>
        <begin position="1"/>
        <end position="8"/>
    </location>
</feature>
<feature type="transmembrane region" description="Helical; Signal-anchor for type II membrane protein" evidence="1">
    <location>
        <begin position="9"/>
        <end position="29"/>
    </location>
</feature>
<feature type="topological domain" description="Periplasmic" evidence="1">
    <location>
        <begin position="30"/>
        <end position="159"/>
    </location>
</feature>
<feature type="region of interest" description="Disordered" evidence="2">
    <location>
        <begin position="132"/>
        <end position="159"/>
    </location>
</feature>
<feature type="compositionally biased region" description="Basic and acidic residues" evidence="2">
    <location>
        <begin position="132"/>
        <end position="147"/>
    </location>
</feature>
<feature type="binding site" description="covalent" evidence="1">
    <location>
        <position position="130"/>
    </location>
    <ligand>
        <name>heme</name>
        <dbReference type="ChEBI" id="CHEBI:30413"/>
    </ligand>
</feature>
<feature type="binding site" description="axial binding residue" evidence="1">
    <location>
        <position position="134"/>
    </location>
    <ligand>
        <name>heme</name>
        <dbReference type="ChEBI" id="CHEBI:30413"/>
    </ligand>
    <ligandPart>
        <name>Fe</name>
        <dbReference type="ChEBI" id="CHEBI:18248"/>
    </ligandPart>
</feature>
<dbReference type="EMBL" id="CP000802">
    <property type="protein sequence ID" value="ABV06613.1"/>
    <property type="molecule type" value="Genomic_DNA"/>
</dbReference>
<dbReference type="RefSeq" id="WP_001026418.1">
    <property type="nucleotide sequence ID" value="NC_009800.1"/>
</dbReference>
<dbReference type="BMRB" id="A8A259"/>
<dbReference type="SMR" id="A8A259"/>
<dbReference type="GeneID" id="86860369"/>
<dbReference type="KEGG" id="ecx:EcHS_A2335"/>
<dbReference type="HOGENOM" id="CLU_079503_1_0_6"/>
<dbReference type="GO" id="GO:0005886">
    <property type="term" value="C:plasma membrane"/>
    <property type="evidence" value="ECO:0007669"/>
    <property type="project" value="UniProtKB-SubCell"/>
</dbReference>
<dbReference type="GO" id="GO:0020037">
    <property type="term" value="F:heme binding"/>
    <property type="evidence" value="ECO:0007669"/>
    <property type="project" value="InterPro"/>
</dbReference>
<dbReference type="GO" id="GO:0046872">
    <property type="term" value="F:metal ion binding"/>
    <property type="evidence" value="ECO:0007669"/>
    <property type="project" value="UniProtKB-KW"/>
</dbReference>
<dbReference type="GO" id="GO:0017004">
    <property type="term" value="P:cytochrome complex assembly"/>
    <property type="evidence" value="ECO:0007669"/>
    <property type="project" value="UniProtKB-KW"/>
</dbReference>
<dbReference type="FunFam" id="2.40.50.140:FF:000104">
    <property type="entry name" value="Cytochrome c-type biogenesis protein CcmE"/>
    <property type="match status" value="1"/>
</dbReference>
<dbReference type="Gene3D" id="2.40.50.140">
    <property type="entry name" value="Nucleic acid-binding proteins"/>
    <property type="match status" value="1"/>
</dbReference>
<dbReference type="HAMAP" id="MF_01959">
    <property type="entry name" value="CcmE"/>
    <property type="match status" value="1"/>
</dbReference>
<dbReference type="InterPro" id="IPR004329">
    <property type="entry name" value="CcmE"/>
</dbReference>
<dbReference type="InterPro" id="IPR036127">
    <property type="entry name" value="CcmE-like_sf"/>
</dbReference>
<dbReference type="InterPro" id="IPR012340">
    <property type="entry name" value="NA-bd_OB-fold"/>
</dbReference>
<dbReference type="NCBIfam" id="NF009635">
    <property type="entry name" value="PRK13150.1"/>
    <property type="match status" value="1"/>
</dbReference>
<dbReference type="NCBIfam" id="NF009638">
    <property type="entry name" value="PRK13165.1"/>
    <property type="match status" value="1"/>
</dbReference>
<dbReference type="NCBIfam" id="NF009727">
    <property type="entry name" value="PRK13254.1-1"/>
    <property type="match status" value="1"/>
</dbReference>
<dbReference type="NCBIfam" id="NF009729">
    <property type="entry name" value="PRK13254.1-3"/>
    <property type="match status" value="1"/>
</dbReference>
<dbReference type="PANTHER" id="PTHR34128">
    <property type="entry name" value="CYTOCHROME C-TYPE BIOGENESIS PROTEIN CCME HOMOLOG, MITOCHONDRIAL"/>
    <property type="match status" value="1"/>
</dbReference>
<dbReference type="PANTHER" id="PTHR34128:SF2">
    <property type="entry name" value="CYTOCHROME C-TYPE BIOGENESIS PROTEIN CCME HOMOLOG, MITOCHONDRIAL"/>
    <property type="match status" value="1"/>
</dbReference>
<dbReference type="Pfam" id="PF03100">
    <property type="entry name" value="CcmE"/>
    <property type="match status" value="1"/>
</dbReference>
<dbReference type="SUPFAM" id="SSF82093">
    <property type="entry name" value="Heme chaperone CcmE"/>
    <property type="match status" value="1"/>
</dbReference>
<accession>A8A259</accession>
<protein>
    <recommendedName>
        <fullName evidence="1">Cytochrome c-type biogenesis protein CcmE</fullName>
    </recommendedName>
    <alternativeName>
        <fullName evidence="1">Cytochrome c maturation protein E</fullName>
    </alternativeName>
    <alternativeName>
        <fullName evidence="1">Heme chaperone CcmE</fullName>
    </alternativeName>
</protein>
<evidence type="ECO:0000255" key="1">
    <source>
        <dbReference type="HAMAP-Rule" id="MF_01959"/>
    </source>
</evidence>
<evidence type="ECO:0000256" key="2">
    <source>
        <dbReference type="SAM" id="MobiDB-lite"/>
    </source>
</evidence>
<proteinExistence type="inferred from homology"/>
<sequence length="159" mass="17698">MNIRRKNRLWIACAVLAGLALTIGLVLYALRSNIDLFYTPGEILYGKRETQQMPEVGQRLRVGGMVMPGSVQRDPNSLKVTFTIYDAEGSVDVSYEGILPDLFREGQGVVVQGELEKGNHILAKEVLAKHDENYTPPEVEKAMEANHRRPASVYKDPAS</sequence>
<comment type="function">
    <text evidence="1">Heme chaperone required for the biogenesis of c-type cytochromes. Transiently binds heme delivered by CcmC and transfers the heme to apo-cytochromes in a process facilitated by CcmF and CcmH.</text>
</comment>
<comment type="subcellular location">
    <subcellularLocation>
        <location evidence="1">Cell inner membrane</location>
        <topology evidence="1">Single-pass type II membrane protein</topology>
        <orientation evidence="1">Periplasmic side</orientation>
    </subcellularLocation>
</comment>
<comment type="similarity">
    <text evidence="1">Belongs to the CcmE/CycJ family.</text>
</comment>
<organism>
    <name type="scientific">Escherichia coli O9:H4 (strain HS)</name>
    <dbReference type="NCBI Taxonomy" id="331112"/>
    <lineage>
        <taxon>Bacteria</taxon>
        <taxon>Pseudomonadati</taxon>
        <taxon>Pseudomonadota</taxon>
        <taxon>Gammaproteobacteria</taxon>
        <taxon>Enterobacterales</taxon>
        <taxon>Enterobacteriaceae</taxon>
        <taxon>Escherichia</taxon>
    </lineage>
</organism>
<reference key="1">
    <citation type="journal article" date="2008" name="J. Bacteriol.">
        <title>The pangenome structure of Escherichia coli: comparative genomic analysis of E. coli commensal and pathogenic isolates.</title>
        <authorList>
            <person name="Rasko D.A."/>
            <person name="Rosovitz M.J."/>
            <person name="Myers G.S.A."/>
            <person name="Mongodin E.F."/>
            <person name="Fricke W.F."/>
            <person name="Gajer P."/>
            <person name="Crabtree J."/>
            <person name="Sebaihia M."/>
            <person name="Thomson N.R."/>
            <person name="Chaudhuri R."/>
            <person name="Henderson I.R."/>
            <person name="Sperandio V."/>
            <person name="Ravel J."/>
        </authorList>
    </citation>
    <scope>NUCLEOTIDE SEQUENCE [LARGE SCALE GENOMIC DNA]</scope>
    <source>
        <strain>HS</strain>
    </source>
</reference>
<name>CCME_ECOHS</name>
<keyword id="KW-0997">Cell inner membrane</keyword>
<keyword id="KW-1003">Cell membrane</keyword>
<keyword id="KW-0201">Cytochrome c-type biogenesis</keyword>
<keyword id="KW-0349">Heme</keyword>
<keyword id="KW-0408">Iron</keyword>
<keyword id="KW-0472">Membrane</keyword>
<keyword id="KW-0479">Metal-binding</keyword>
<keyword id="KW-0735">Signal-anchor</keyword>
<keyword id="KW-0812">Transmembrane</keyword>
<keyword id="KW-1133">Transmembrane helix</keyword>